<sequence>MNHPTLTIDPGAVAANWQALAARHTGEVAGVVKADAYGLGAALIAPALAAAGCRSFFVATLDEALSLRALLPAARIGVLNGCPPGEEGTMRARELRPVLGSLAACARWRGAAGDDKAPPSFLHLDTGMNRLGLDRDEAAHLIAHPTLLDGLGLTHVMTHLVAAEEPDASANAAQRERFAAFAARFPWLRTSLANSSGLFLGPGFGSDLARPGYALYGGNPTPTAANPMRPAIALAAPILQIRAIASGETVGYNGTWRAARPSRIATIGVGYADGLPRSLSNRLTARWQGKIIPVAGRLSMDLTTFDVTDHPDIAPGDVIELIGPGHDIDAFAAEAGTIGYEILTSLGPRYRRVVKSV</sequence>
<protein>
    <recommendedName>
        <fullName evidence="1">Alanine racemase</fullName>
        <ecNumber evidence="1">5.1.1.1</ecNumber>
    </recommendedName>
</protein>
<accession>A5G2H9</accession>
<organism>
    <name type="scientific">Acidiphilium cryptum (strain JF-5)</name>
    <dbReference type="NCBI Taxonomy" id="349163"/>
    <lineage>
        <taxon>Bacteria</taxon>
        <taxon>Pseudomonadati</taxon>
        <taxon>Pseudomonadota</taxon>
        <taxon>Alphaproteobacteria</taxon>
        <taxon>Acetobacterales</taxon>
        <taxon>Acidocellaceae</taxon>
        <taxon>Acidiphilium</taxon>
    </lineage>
</organism>
<comment type="function">
    <text evidence="1">Catalyzes the interconversion of L-alanine and D-alanine. May also act on other amino acids.</text>
</comment>
<comment type="catalytic activity">
    <reaction evidence="1">
        <text>L-alanine = D-alanine</text>
        <dbReference type="Rhea" id="RHEA:20249"/>
        <dbReference type="ChEBI" id="CHEBI:57416"/>
        <dbReference type="ChEBI" id="CHEBI:57972"/>
        <dbReference type="EC" id="5.1.1.1"/>
    </reaction>
</comment>
<comment type="cofactor">
    <cofactor evidence="1">
        <name>pyridoxal 5'-phosphate</name>
        <dbReference type="ChEBI" id="CHEBI:597326"/>
    </cofactor>
</comment>
<comment type="pathway">
    <text evidence="1">Amino-acid biosynthesis; D-alanine biosynthesis; D-alanine from L-alanine: step 1/1.</text>
</comment>
<comment type="similarity">
    <text evidence="1">Belongs to the alanine racemase family.</text>
</comment>
<keyword id="KW-0413">Isomerase</keyword>
<keyword id="KW-0663">Pyridoxal phosphate</keyword>
<keyword id="KW-1185">Reference proteome</keyword>
<evidence type="ECO:0000255" key="1">
    <source>
        <dbReference type="HAMAP-Rule" id="MF_01201"/>
    </source>
</evidence>
<feature type="chain" id="PRO_1000138578" description="Alanine racemase">
    <location>
        <begin position="1"/>
        <end position="357"/>
    </location>
</feature>
<feature type="active site" description="Proton acceptor; specific for D-alanine" evidence="1">
    <location>
        <position position="33"/>
    </location>
</feature>
<feature type="active site" description="Proton acceptor; specific for L-alanine" evidence="1">
    <location>
        <position position="252"/>
    </location>
</feature>
<feature type="binding site" evidence="1">
    <location>
        <position position="130"/>
    </location>
    <ligand>
        <name>substrate</name>
    </ligand>
</feature>
<feature type="binding site" evidence="1">
    <location>
        <position position="300"/>
    </location>
    <ligand>
        <name>substrate</name>
    </ligand>
</feature>
<feature type="modified residue" description="N6-(pyridoxal phosphate)lysine" evidence="1">
    <location>
        <position position="33"/>
    </location>
</feature>
<proteinExistence type="inferred from homology"/>
<dbReference type="EC" id="5.1.1.1" evidence="1"/>
<dbReference type="EMBL" id="CP000697">
    <property type="protein sequence ID" value="ABQ32061.1"/>
    <property type="molecule type" value="Genomic_DNA"/>
</dbReference>
<dbReference type="RefSeq" id="WP_012040378.1">
    <property type="nucleotide sequence ID" value="NC_009484.1"/>
</dbReference>
<dbReference type="SMR" id="A5G2H9"/>
<dbReference type="STRING" id="349163.Acry_2871"/>
<dbReference type="KEGG" id="acr:Acry_2871"/>
<dbReference type="eggNOG" id="COG0787">
    <property type="taxonomic scope" value="Bacteria"/>
</dbReference>
<dbReference type="HOGENOM" id="CLU_028393_1_1_5"/>
<dbReference type="UniPathway" id="UPA00042">
    <property type="reaction ID" value="UER00497"/>
</dbReference>
<dbReference type="Proteomes" id="UP000000245">
    <property type="component" value="Chromosome"/>
</dbReference>
<dbReference type="GO" id="GO:0005829">
    <property type="term" value="C:cytosol"/>
    <property type="evidence" value="ECO:0007669"/>
    <property type="project" value="TreeGrafter"/>
</dbReference>
<dbReference type="GO" id="GO:0008784">
    <property type="term" value="F:alanine racemase activity"/>
    <property type="evidence" value="ECO:0007669"/>
    <property type="project" value="UniProtKB-UniRule"/>
</dbReference>
<dbReference type="GO" id="GO:0030170">
    <property type="term" value="F:pyridoxal phosphate binding"/>
    <property type="evidence" value="ECO:0007669"/>
    <property type="project" value="UniProtKB-UniRule"/>
</dbReference>
<dbReference type="GO" id="GO:0030632">
    <property type="term" value="P:D-alanine biosynthetic process"/>
    <property type="evidence" value="ECO:0007669"/>
    <property type="project" value="UniProtKB-UniRule"/>
</dbReference>
<dbReference type="CDD" id="cd00430">
    <property type="entry name" value="PLPDE_III_AR"/>
    <property type="match status" value="1"/>
</dbReference>
<dbReference type="Gene3D" id="3.20.20.10">
    <property type="entry name" value="Alanine racemase"/>
    <property type="match status" value="1"/>
</dbReference>
<dbReference type="Gene3D" id="2.40.37.10">
    <property type="entry name" value="Lyase, Ornithine Decarboxylase, Chain A, domain 1"/>
    <property type="match status" value="1"/>
</dbReference>
<dbReference type="HAMAP" id="MF_01201">
    <property type="entry name" value="Ala_racemase"/>
    <property type="match status" value="1"/>
</dbReference>
<dbReference type="InterPro" id="IPR000821">
    <property type="entry name" value="Ala_racemase"/>
</dbReference>
<dbReference type="InterPro" id="IPR009006">
    <property type="entry name" value="Ala_racemase/Decarboxylase_C"/>
</dbReference>
<dbReference type="InterPro" id="IPR011079">
    <property type="entry name" value="Ala_racemase_C"/>
</dbReference>
<dbReference type="InterPro" id="IPR001608">
    <property type="entry name" value="Ala_racemase_N"/>
</dbReference>
<dbReference type="InterPro" id="IPR020622">
    <property type="entry name" value="Ala_racemase_pyridoxalP-BS"/>
</dbReference>
<dbReference type="InterPro" id="IPR029066">
    <property type="entry name" value="PLP-binding_barrel"/>
</dbReference>
<dbReference type="NCBIfam" id="TIGR00492">
    <property type="entry name" value="alr"/>
    <property type="match status" value="1"/>
</dbReference>
<dbReference type="PANTHER" id="PTHR30511">
    <property type="entry name" value="ALANINE RACEMASE"/>
    <property type="match status" value="1"/>
</dbReference>
<dbReference type="PANTHER" id="PTHR30511:SF0">
    <property type="entry name" value="ALANINE RACEMASE, CATABOLIC-RELATED"/>
    <property type="match status" value="1"/>
</dbReference>
<dbReference type="Pfam" id="PF00842">
    <property type="entry name" value="Ala_racemase_C"/>
    <property type="match status" value="1"/>
</dbReference>
<dbReference type="Pfam" id="PF01168">
    <property type="entry name" value="Ala_racemase_N"/>
    <property type="match status" value="1"/>
</dbReference>
<dbReference type="PRINTS" id="PR00992">
    <property type="entry name" value="ALARACEMASE"/>
</dbReference>
<dbReference type="SMART" id="SM01005">
    <property type="entry name" value="Ala_racemase_C"/>
    <property type="match status" value="1"/>
</dbReference>
<dbReference type="SUPFAM" id="SSF50621">
    <property type="entry name" value="Alanine racemase C-terminal domain-like"/>
    <property type="match status" value="1"/>
</dbReference>
<dbReference type="SUPFAM" id="SSF51419">
    <property type="entry name" value="PLP-binding barrel"/>
    <property type="match status" value="1"/>
</dbReference>
<dbReference type="PROSITE" id="PS00395">
    <property type="entry name" value="ALANINE_RACEMASE"/>
    <property type="match status" value="1"/>
</dbReference>
<reference key="1">
    <citation type="submission" date="2007-05" db="EMBL/GenBank/DDBJ databases">
        <title>Complete sequence of chromosome of Acidiphilium cryptum JF-5.</title>
        <authorList>
            <consortium name="US DOE Joint Genome Institute"/>
            <person name="Copeland A."/>
            <person name="Lucas S."/>
            <person name="Lapidus A."/>
            <person name="Barry K."/>
            <person name="Detter J.C."/>
            <person name="Glavina del Rio T."/>
            <person name="Hammon N."/>
            <person name="Israni S."/>
            <person name="Dalin E."/>
            <person name="Tice H."/>
            <person name="Pitluck S."/>
            <person name="Sims D."/>
            <person name="Brettin T."/>
            <person name="Bruce D."/>
            <person name="Han C."/>
            <person name="Schmutz J."/>
            <person name="Larimer F."/>
            <person name="Land M."/>
            <person name="Hauser L."/>
            <person name="Kyrpides N."/>
            <person name="Kim E."/>
            <person name="Magnuson T."/>
            <person name="Richardson P."/>
        </authorList>
    </citation>
    <scope>NUCLEOTIDE SEQUENCE [LARGE SCALE GENOMIC DNA]</scope>
    <source>
        <strain>JF-5</strain>
    </source>
</reference>
<gene>
    <name type="primary">alr</name>
    <name type="ordered locus">Acry_2871</name>
</gene>
<name>ALR_ACICJ</name>